<organism>
    <name type="scientific">Burkholderia pseudomallei (strain K96243)</name>
    <dbReference type="NCBI Taxonomy" id="272560"/>
    <lineage>
        <taxon>Bacteria</taxon>
        <taxon>Pseudomonadati</taxon>
        <taxon>Pseudomonadota</taxon>
        <taxon>Betaproteobacteria</taxon>
        <taxon>Burkholderiales</taxon>
        <taxon>Burkholderiaceae</taxon>
        <taxon>Burkholderia</taxon>
        <taxon>pseudomallei group</taxon>
    </lineage>
</organism>
<gene>
    <name evidence="1" type="primary">cynS</name>
    <name type="ordered locus">BPSL2950</name>
</gene>
<keyword id="KW-0456">Lyase</keyword>
<keyword id="KW-1185">Reference proteome</keyword>
<sequence length="156" mass="16932">MTQSQHSQSAREALAERIVEAKTRKNLTFEQINEGTGLSVAFTTAALLGQHPLPADAARVVAAKLDLDDDAQRLLQTIPVRGSIPGGVPTDPTIYRFYEIVQVYGSTLKALIHEQFGDGIVSAINFKLDIKKVDDPEGGSRAVITLDGKYLPTKPF</sequence>
<evidence type="ECO:0000255" key="1">
    <source>
        <dbReference type="HAMAP-Rule" id="MF_00535"/>
    </source>
</evidence>
<name>CYNS_BURPS</name>
<reference key="1">
    <citation type="journal article" date="2004" name="Proc. Natl. Acad. Sci. U.S.A.">
        <title>Genomic plasticity of the causative agent of melioidosis, Burkholderia pseudomallei.</title>
        <authorList>
            <person name="Holden M.T.G."/>
            <person name="Titball R.W."/>
            <person name="Peacock S.J."/>
            <person name="Cerdeno-Tarraga A.-M."/>
            <person name="Atkins T."/>
            <person name="Crossman L.C."/>
            <person name="Pitt T."/>
            <person name="Churcher C."/>
            <person name="Mungall K.L."/>
            <person name="Bentley S.D."/>
            <person name="Sebaihia M."/>
            <person name="Thomson N.R."/>
            <person name="Bason N."/>
            <person name="Beacham I.R."/>
            <person name="Brooks K."/>
            <person name="Brown K.A."/>
            <person name="Brown N.F."/>
            <person name="Challis G.L."/>
            <person name="Cherevach I."/>
            <person name="Chillingworth T."/>
            <person name="Cronin A."/>
            <person name="Crossett B."/>
            <person name="Davis P."/>
            <person name="DeShazer D."/>
            <person name="Feltwell T."/>
            <person name="Fraser A."/>
            <person name="Hance Z."/>
            <person name="Hauser H."/>
            <person name="Holroyd S."/>
            <person name="Jagels K."/>
            <person name="Keith K.E."/>
            <person name="Maddison M."/>
            <person name="Moule S."/>
            <person name="Price C."/>
            <person name="Quail M.A."/>
            <person name="Rabbinowitsch E."/>
            <person name="Rutherford K."/>
            <person name="Sanders M."/>
            <person name="Simmonds M."/>
            <person name="Songsivilai S."/>
            <person name="Stevens K."/>
            <person name="Tumapa S."/>
            <person name="Vesaratchavest M."/>
            <person name="Whitehead S."/>
            <person name="Yeats C."/>
            <person name="Barrell B.G."/>
            <person name="Oyston P.C.F."/>
            <person name="Parkhill J."/>
        </authorList>
    </citation>
    <scope>NUCLEOTIDE SEQUENCE [LARGE SCALE GENOMIC DNA]</scope>
    <source>
        <strain>K96243</strain>
    </source>
</reference>
<feature type="chain" id="PRO_1000051473" description="Cyanate hydratase">
    <location>
        <begin position="1"/>
        <end position="156"/>
    </location>
</feature>
<feature type="active site" evidence="1">
    <location>
        <position position="96"/>
    </location>
</feature>
<feature type="active site" evidence="1">
    <location>
        <position position="99"/>
    </location>
</feature>
<feature type="active site" evidence="1">
    <location>
        <position position="122"/>
    </location>
</feature>
<comment type="function">
    <text evidence="1">Catalyzes the reaction of cyanate with bicarbonate to produce ammonia and carbon dioxide.</text>
</comment>
<comment type="catalytic activity">
    <reaction evidence="1">
        <text>cyanate + hydrogencarbonate + 3 H(+) = NH4(+) + 2 CO2</text>
        <dbReference type="Rhea" id="RHEA:11120"/>
        <dbReference type="ChEBI" id="CHEBI:15378"/>
        <dbReference type="ChEBI" id="CHEBI:16526"/>
        <dbReference type="ChEBI" id="CHEBI:17544"/>
        <dbReference type="ChEBI" id="CHEBI:28938"/>
        <dbReference type="ChEBI" id="CHEBI:29195"/>
        <dbReference type="EC" id="4.2.1.104"/>
    </reaction>
</comment>
<comment type="similarity">
    <text evidence="1">Belongs to the cyanase family.</text>
</comment>
<protein>
    <recommendedName>
        <fullName evidence="1">Cyanate hydratase</fullName>
        <shortName evidence="1">Cyanase</shortName>
        <ecNumber evidence="1">4.2.1.104</ecNumber>
    </recommendedName>
    <alternativeName>
        <fullName evidence="1">Cyanate hydrolase</fullName>
    </alternativeName>
    <alternativeName>
        <fullName evidence="1">Cyanate lyase</fullName>
    </alternativeName>
</protein>
<accession>Q63QS4</accession>
<proteinExistence type="inferred from homology"/>
<dbReference type="EC" id="4.2.1.104" evidence="1"/>
<dbReference type="EMBL" id="BX571965">
    <property type="protein sequence ID" value="CAH36960.1"/>
    <property type="molecule type" value="Genomic_DNA"/>
</dbReference>
<dbReference type="RefSeq" id="WP_004522069.1">
    <property type="nucleotide sequence ID" value="NZ_CP009538.1"/>
</dbReference>
<dbReference type="RefSeq" id="YP_109544.1">
    <property type="nucleotide sequence ID" value="NC_006350.1"/>
</dbReference>
<dbReference type="SMR" id="Q63QS4"/>
<dbReference type="STRING" id="272560.BPSL2950"/>
<dbReference type="KEGG" id="bps:BPSL2950"/>
<dbReference type="PATRIC" id="fig|272560.51.peg.2329"/>
<dbReference type="eggNOG" id="COG1513">
    <property type="taxonomic scope" value="Bacteria"/>
</dbReference>
<dbReference type="Proteomes" id="UP000000605">
    <property type="component" value="Chromosome 1"/>
</dbReference>
<dbReference type="GO" id="GO:0008824">
    <property type="term" value="F:cyanate hydratase activity"/>
    <property type="evidence" value="ECO:0007669"/>
    <property type="project" value="UniProtKB-UniRule"/>
</dbReference>
<dbReference type="GO" id="GO:0003677">
    <property type="term" value="F:DNA binding"/>
    <property type="evidence" value="ECO:0007669"/>
    <property type="project" value="InterPro"/>
</dbReference>
<dbReference type="GO" id="GO:0009439">
    <property type="term" value="P:cyanate metabolic process"/>
    <property type="evidence" value="ECO:0007669"/>
    <property type="project" value="UniProtKB-UniRule"/>
</dbReference>
<dbReference type="CDD" id="cd00559">
    <property type="entry name" value="Cyanase_C"/>
    <property type="match status" value="1"/>
</dbReference>
<dbReference type="Gene3D" id="3.30.1160.10">
    <property type="entry name" value="Cyanate lyase, C-terminal domain"/>
    <property type="match status" value="1"/>
</dbReference>
<dbReference type="Gene3D" id="1.10.260.40">
    <property type="entry name" value="lambda repressor-like DNA-binding domains"/>
    <property type="match status" value="1"/>
</dbReference>
<dbReference type="HAMAP" id="MF_00535">
    <property type="entry name" value="Cyanate_hydrat"/>
    <property type="match status" value="1"/>
</dbReference>
<dbReference type="InterPro" id="IPR008076">
    <property type="entry name" value="Cyanase"/>
</dbReference>
<dbReference type="InterPro" id="IPR003712">
    <property type="entry name" value="Cyanate_lyase_C"/>
</dbReference>
<dbReference type="InterPro" id="IPR036581">
    <property type="entry name" value="Cyanate_lyase_C_sf"/>
</dbReference>
<dbReference type="InterPro" id="IPR048564">
    <property type="entry name" value="CYNS_N"/>
</dbReference>
<dbReference type="InterPro" id="IPR010982">
    <property type="entry name" value="Lambda_DNA-bd_dom_sf"/>
</dbReference>
<dbReference type="NCBIfam" id="TIGR00673">
    <property type="entry name" value="cynS"/>
    <property type="match status" value="1"/>
</dbReference>
<dbReference type="NCBIfam" id="NF002773">
    <property type="entry name" value="PRK02866.1"/>
    <property type="match status" value="1"/>
</dbReference>
<dbReference type="PANTHER" id="PTHR34186">
    <property type="entry name" value="CYANATE HYDRATASE"/>
    <property type="match status" value="1"/>
</dbReference>
<dbReference type="PANTHER" id="PTHR34186:SF2">
    <property type="entry name" value="CYANATE HYDRATASE"/>
    <property type="match status" value="1"/>
</dbReference>
<dbReference type="Pfam" id="PF02560">
    <property type="entry name" value="Cyanate_lyase"/>
    <property type="match status" value="1"/>
</dbReference>
<dbReference type="Pfam" id="PF21291">
    <property type="entry name" value="CYNS_N"/>
    <property type="match status" value="1"/>
</dbReference>
<dbReference type="PIRSF" id="PIRSF001263">
    <property type="entry name" value="Cyanate_hydratas"/>
    <property type="match status" value="1"/>
</dbReference>
<dbReference type="PRINTS" id="PR01693">
    <property type="entry name" value="CYANASE"/>
</dbReference>
<dbReference type="SMART" id="SM01116">
    <property type="entry name" value="Cyanate_lyase"/>
    <property type="match status" value="1"/>
</dbReference>
<dbReference type="SUPFAM" id="SSF55234">
    <property type="entry name" value="Cyanase C-terminal domain"/>
    <property type="match status" value="1"/>
</dbReference>
<dbReference type="SUPFAM" id="SSF47413">
    <property type="entry name" value="lambda repressor-like DNA-binding domains"/>
    <property type="match status" value="1"/>
</dbReference>